<name>NRDR_LACP7</name>
<gene>
    <name evidence="1" type="primary">nrdR</name>
    <name type="ordered locus">Cphy_2725</name>
</gene>
<organism>
    <name type="scientific">Lachnoclostridium phytofermentans (strain ATCC 700394 / DSM 18823 / ISDg)</name>
    <name type="common">Clostridium phytofermentans</name>
    <dbReference type="NCBI Taxonomy" id="357809"/>
    <lineage>
        <taxon>Bacteria</taxon>
        <taxon>Bacillati</taxon>
        <taxon>Bacillota</taxon>
        <taxon>Clostridia</taxon>
        <taxon>Lachnospirales</taxon>
        <taxon>Lachnospiraceae</taxon>
    </lineage>
</organism>
<evidence type="ECO:0000255" key="1">
    <source>
        <dbReference type="HAMAP-Rule" id="MF_00440"/>
    </source>
</evidence>
<sequence length="153" mass="17860">MKCPFCGKENTRVIDSRPADDCSSIRRRRQCDECSKRFTTYEKVETIPLVVIKKDNNREPYDRSKIEAGVFRSCHKRPISVDQINALVDEVENTIFNLEEKEVPSNKIGEIVMDKLKSLDAVAYVRFASVYREFKDVNTFMNELKKILDHEHV</sequence>
<feature type="chain" id="PRO_1000080737" description="Transcriptional repressor NrdR">
    <location>
        <begin position="1"/>
        <end position="153"/>
    </location>
</feature>
<feature type="domain" description="ATP-cone" evidence="1">
    <location>
        <begin position="49"/>
        <end position="139"/>
    </location>
</feature>
<feature type="zinc finger region" evidence="1">
    <location>
        <begin position="3"/>
        <end position="34"/>
    </location>
</feature>
<dbReference type="EMBL" id="CP000885">
    <property type="protein sequence ID" value="ABX43086.1"/>
    <property type="molecule type" value="Genomic_DNA"/>
</dbReference>
<dbReference type="RefSeq" id="WP_012200738.1">
    <property type="nucleotide sequence ID" value="NC_010001.1"/>
</dbReference>
<dbReference type="SMR" id="A9KNG9"/>
<dbReference type="STRING" id="357809.Cphy_2725"/>
<dbReference type="KEGG" id="cpy:Cphy_2725"/>
<dbReference type="eggNOG" id="COG1327">
    <property type="taxonomic scope" value="Bacteria"/>
</dbReference>
<dbReference type="HOGENOM" id="CLU_108412_0_0_9"/>
<dbReference type="OrthoDB" id="9807461at2"/>
<dbReference type="Proteomes" id="UP000000370">
    <property type="component" value="Chromosome"/>
</dbReference>
<dbReference type="GO" id="GO:0005524">
    <property type="term" value="F:ATP binding"/>
    <property type="evidence" value="ECO:0007669"/>
    <property type="project" value="UniProtKB-KW"/>
</dbReference>
<dbReference type="GO" id="GO:0003677">
    <property type="term" value="F:DNA binding"/>
    <property type="evidence" value="ECO:0007669"/>
    <property type="project" value="UniProtKB-KW"/>
</dbReference>
<dbReference type="GO" id="GO:0008270">
    <property type="term" value="F:zinc ion binding"/>
    <property type="evidence" value="ECO:0007669"/>
    <property type="project" value="UniProtKB-UniRule"/>
</dbReference>
<dbReference type="GO" id="GO:0045892">
    <property type="term" value="P:negative regulation of DNA-templated transcription"/>
    <property type="evidence" value="ECO:0007669"/>
    <property type="project" value="UniProtKB-UniRule"/>
</dbReference>
<dbReference type="HAMAP" id="MF_00440">
    <property type="entry name" value="NrdR"/>
    <property type="match status" value="1"/>
</dbReference>
<dbReference type="InterPro" id="IPR005144">
    <property type="entry name" value="ATP-cone_dom"/>
</dbReference>
<dbReference type="InterPro" id="IPR055173">
    <property type="entry name" value="NrdR-like_N"/>
</dbReference>
<dbReference type="InterPro" id="IPR003796">
    <property type="entry name" value="RNR_NrdR-like"/>
</dbReference>
<dbReference type="NCBIfam" id="TIGR00244">
    <property type="entry name" value="transcriptional regulator NrdR"/>
    <property type="match status" value="1"/>
</dbReference>
<dbReference type="PANTHER" id="PTHR30455">
    <property type="entry name" value="TRANSCRIPTIONAL REPRESSOR NRDR"/>
    <property type="match status" value="1"/>
</dbReference>
<dbReference type="PANTHER" id="PTHR30455:SF2">
    <property type="entry name" value="TRANSCRIPTIONAL REPRESSOR NRDR"/>
    <property type="match status" value="1"/>
</dbReference>
<dbReference type="Pfam" id="PF03477">
    <property type="entry name" value="ATP-cone"/>
    <property type="match status" value="1"/>
</dbReference>
<dbReference type="Pfam" id="PF22811">
    <property type="entry name" value="Zn_ribbon_NrdR"/>
    <property type="match status" value="1"/>
</dbReference>
<dbReference type="PROSITE" id="PS51161">
    <property type="entry name" value="ATP_CONE"/>
    <property type="match status" value="1"/>
</dbReference>
<comment type="function">
    <text evidence="1">Negatively regulates transcription of bacterial ribonucleotide reductase nrd genes and operons by binding to NrdR-boxes.</text>
</comment>
<comment type="cofactor">
    <cofactor evidence="1">
        <name>Zn(2+)</name>
        <dbReference type="ChEBI" id="CHEBI:29105"/>
    </cofactor>
    <text evidence="1">Binds 1 zinc ion.</text>
</comment>
<comment type="similarity">
    <text evidence="1">Belongs to the NrdR family.</text>
</comment>
<protein>
    <recommendedName>
        <fullName evidence="1">Transcriptional repressor NrdR</fullName>
    </recommendedName>
</protein>
<reference key="1">
    <citation type="submission" date="2007-11" db="EMBL/GenBank/DDBJ databases">
        <title>Complete genome sequence of Clostridium phytofermentans ISDg.</title>
        <authorList>
            <person name="Leschine S.B."/>
            <person name="Warnick T.A."/>
            <person name="Blanchard J.L."/>
            <person name="Schnell D.J."/>
            <person name="Petit E.L."/>
            <person name="LaTouf W.G."/>
            <person name="Copeland A."/>
            <person name="Lucas S."/>
            <person name="Lapidus A."/>
            <person name="Barry K."/>
            <person name="Glavina del Rio T."/>
            <person name="Dalin E."/>
            <person name="Tice H."/>
            <person name="Pitluck S."/>
            <person name="Kiss H."/>
            <person name="Brettin T."/>
            <person name="Bruce D."/>
            <person name="Detter J.C."/>
            <person name="Han C."/>
            <person name="Kuske C."/>
            <person name="Schmutz J."/>
            <person name="Larimer F."/>
            <person name="Land M."/>
            <person name="Hauser L."/>
            <person name="Kyrpides N."/>
            <person name="Kim E.A."/>
            <person name="Richardson P."/>
        </authorList>
    </citation>
    <scope>NUCLEOTIDE SEQUENCE [LARGE SCALE GENOMIC DNA]</scope>
    <source>
        <strain>ATCC 700394 / DSM 18823 / ISDg</strain>
    </source>
</reference>
<proteinExistence type="inferred from homology"/>
<keyword id="KW-0067">ATP-binding</keyword>
<keyword id="KW-0238">DNA-binding</keyword>
<keyword id="KW-0479">Metal-binding</keyword>
<keyword id="KW-0547">Nucleotide-binding</keyword>
<keyword id="KW-1185">Reference proteome</keyword>
<keyword id="KW-0678">Repressor</keyword>
<keyword id="KW-0804">Transcription</keyword>
<keyword id="KW-0805">Transcription regulation</keyword>
<keyword id="KW-0862">Zinc</keyword>
<keyword id="KW-0863">Zinc-finger</keyword>
<accession>A9KNG9</accession>